<proteinExistence type="inferred from homology"/>
<gene>
    <name evidence="1" type="primary">psbK</name>
</gene>
<sequence length="48" mass="5445">MFPSTNQEVLALLPEAYAPFDPIVDVLPIIPLLFLLLAFVWQASVKFR</sequence>
<keyword id="KW-0150">Chloroplast</keyword>
<keyword id="KW-0472">Membrane</keyword>
<keyword id="KW-0602">Photosynthesis</keyword>
<keyword id="KW-0604">Photosystem II</keyword>
<keyword id="KW-0934">Plastid</keyword>
<keyword id="KW-0674">Reaction center</keyword>
<keyword id="KW-0793">Thylakoid</keyword>
<keyword id="KW-0812">Transmembrane</keyword>
<keyword id="KW-1133">Transmembrane helix</keyword>
<accession>Q9MS61</accession>
<reference key="1">
    <citation type="journal article" date="2001" name="Mol. Gen. Genet.">
        <title>Comparison of psbK operon organization and group III intron content in chloroplast genomes of 12 Euglenoid species.</title>
        <authorList>
            <person name="Doetsch N.A."/>
            <person name="Thompson M.D."/>
            <person name="Favreau M.R."/>
            <person name="Hallick R.B."/>
        </authorList>
    </citation>
    <scope>NUCLEOTIDE SEQUENCE [GENOMIC DNA]</scope>
</reference>
<comment type="function">
    <text evidence="1">One of the components of the core complex of photosystem II (PSII). PSII is a light-driven water:plastoquinone oxidoreductase that uses light energy to abstract electrons from H(2)O, generating O(2) and a proton gradient subsequently used for ATP formation. It consists of a core antenna complex that captures photons, and an electron transfer chain that converts photonic excitation into a charge separation.</text>
</comment>
<comment type="subunit">
    <text evidence="2">PSII is composed of 1 copy each of membrane proteins PsbA, PsbB, PsbC, PsbD, PsbE, PsbF, PsbH, PsbI, PsbJ, PsbK, PsbL, PsbM, PsbT, PsbY, PsbZ, Psb30/Ycf12, at least 3 peripheral proteins of the oxygen-evolving complex and a large number of cofactors. It forms dimeric complexes.</text>
</comment>
<comment type="subcellular location">
    <subcellularLocation>
        <location evidence="1">Plastid</location>
        <location evidence="1">Chloroplast thylakoid membrane</location>
        <topology evidence="1">Single-pass membrane protein</topology>
    </subcellularLocation>
</comment>
<comment type="similarity">
    <text evidence="1">Belongs to the PsbK family.</text>
</comment>
<organism>
    <name type="scientific">Euglena sanguinea</name>
    <dbReference type="NCBI Taxonomy" id="130315"/>
    <lineage>
        <taxon>Eukaryota</taxon>
        <taxon>Discoba</taxon>
        <taxon>Euglenozoa</taxon>
        <taxon>Euglenida</taxon>
        <taxon>Spirocuta</taxon>
        <taxon>Euglenophyceae</taxon>
        <taxon>Euglenales</taxon>
        <taxon>Euglenaceae</taxon>
        <taxon>Euglena</taxon>
    </lineage>
</organism>
<dbReference type="EMBL" id="AF241282">
    <property type="protein sequence ID" value="AAF82457.1"/>
    <property type="molecule type" value="Genomic_DNA"/>
</dbReference>
<dbReference type="SMR" id="Q9MS61"/>
<dbReference type="GO" id="GO:0009535">
    <property type="term" value="C:chloroplast thylakoid membrane"/>
    <property type="evidence" value="ECO:0007669"/>
    <property type="project" value="UniProtKB-SubCell"/>
</dbReference>
<dbReference type="GO" id="GO:0009539">
    <property type="term" value="C:photosystem II reaction center"/>
    <property type="evidence" value="ECO:0007669"/>
    <property type="project" value="InterPro"/>
</dbReference>
<dbReference type="GO" id="GO:0015979">
    <property type="term" value="P:photosynthesis"/>
    <property type="evidence" value="ECO:0007669"/>
    <property type="project" value="UniProtKB-UniRule"/>
</dbReference>
<dbReference type="HAMAP" id="MF_00441">
    <property type="entry name" value="PSII_PsbK"/>
    <property type="match status" value="1"/>
</dbReference>
<dbReference type="InterPro" id="IPR003687">
    <property type="entry name" value="PSII_PsbK"/>
</dbReference>
<dbReference type="InterPro" id="IPR037270">
    <property type="entry name" value="PSII_PsbK_sf"/>
</dbReference>
<dbReference type="NCBIfam" id="NF002715">
    <property type="entry name" value="PRK02553.1"/>
    <property type="match status" value="1"/>
</dbReference>
<dbReference type="PANTHER" id="PTHR35325">
    <property type="match status" value="1"/>
</dbReference>
<dbReference type="PANTHER" id="PTHR35325:SF1">
    <property type="entry name" value="PHOTOSYSTEM II REACTION CENTER PROTEIN K"/>
    <property type="match status" value="1"/>
</dbReference>
<dbReference type="Pfam" id="PF02533">
    <property type="entry name" value="PsbK"/>
    <property type="match status" value="1"/>
</dbReference>
<dbReference type="SUPFAM" id="SSF161037">
    <property type="entry name" value="Photosystem II reaction center protein K, PsbK"/>
    <property type="match status" value="1"/>
</dbReference>
<name>PSBK_EUGSA</name>
<evidence type="ECO:0000255" key="1">
    <source>
        <dbReference type="HAMAP-Rule" id="MF_00441"/>
    </source>
</evidence>
<evidence type="ECO:0000305" key="2"/>
<protein>
    <recommendedName>
        <fullName evidence="1">Photosystem II reaction center protein K</fullName>
        <shortName evidence="1">PSII-K</shortName>
    </recommendedName>
</protein>
<feature type="propeptide" id="PRO_0000432464" evidence="1">
    <location>
        <begin position="1"/>
        <end position="11"/>
    </location>
</feature>
<feature type="chain" id="PRO_0000029466" description="Photosystem II reaction center protein K" evidence="1">
    <location>
        <begin position="12"/>
        <end position="48"/>
    </location>
</feature>
<feature type="transmembrane region" description="Helical" evidence="1">
    <location>
        <begin position="23"/>
        <end position="43"/>
    </location>
</feature>
<geneLocation type="chloroplast"/>